<protein>
    <recommendedName>
        <fullName>Probable lysosomal cobalamin transporter</fullName>
    </recommendedName>
</protein>
<name>LMBD1_PYRTR</name>
<dbReference type="EMBL" id="DS231622">
    <property type="protein sequence ID" value="EDU50720.1"/>
    <property type="molecule type" value="Genomic_DNA"/>
</dbReference>
<dbReference type="RefSeq" id="XP_001938133.1">
    <property type="nucleotide sequence ID" value="XM_001938098.1"/>
</dbReference>
<dbReference type="SMR" id="B2WCU2"/>
<dbReference type="STRING" id="426418.B2WCU2"/>
<dbReference type="EnsemblFungi" id="EDU50720">
    <property type="protein sequence ID" value="EDU50720"/>
    <property type="gene ID" value="PTRG_07801"/>
</dbReference>
<dbReference type="GeneID" id="6346075"/>
<dbReference type="KEGG" id="ptrr:6346075"/>
<dbReference type="eggNOG" id="ENOG502QQ2T">
    <property type="taxonomic scope" value="Eukaryota"/>
</dbReference>
<dbReference type="HOGENOM" id="CLU_028341_1_0_1"/>
<dbReference type="InParanoid" id="B2WCU2"/>
<dbReference type="OMA" id="FWAQFVF"/>
<dbReference type="OrthoDB" id="25320at28556"/>
<dbReference type="Proteomes" id="UP000001471">
    <property type="component" value="Unassembled WGS sequence"/>
</dbReference>
<dbReference type="GO" id="GO:0005774">
    <property type="term" value="C:vacuolar membrane"/>
    <property type="evidence" value="ECO:0007669"/>
    <property type="project" value="TreeGrafter"/>
</dbReference>
<dbReference type="GO" id="GO:0031419">
    <property type="term" value="F:cobalamin binding"/>
    <property type="evidence" value="ECO:0007669"/>
    <property type="project" value="UniProtKB-KW"/>
</dbReference>
<dbReference type="GO" id="GO:0072665">
    <property type="term" value="P:protein localization to vacuole"/>
    <property type="evidence" value="ECO:0007669"/>
    <property type="project" value="TreeGrafter"/>
</dbReference>
<dbReference type="InterPro" id="IPR050854">
    <property type="entry name" value="LMBD1_LysCbl_Transport"/>
</dbReference>
<dbReference type="InterPro" id="IPR006876">
    <property type="entry name" value="LMBR1-like_membr_prot"/>
</dbReference>
<dbReference type="PANTHER" id="PTHR16130:SF2">
    <property type="entry name" value="LYSOSOMAL COBALAMIN TRANSPORT ESCORT PROTEIN LMBD1"/>
    <property type="match status" value="1"/>
</dbReference>
<dbReference type="PANTHER" id="PTHR16130">
    <property type="entry name" value="LYSOSOMAL COBALAMIN TRANSPORTER-RELATED"/>
    <property type="match status" value="1"/>
</dbReference>
<dbReference type="Pfam" id="PF04791">
    <property type="entry name" value="LMBR1"/>
    <property type="match status" value="1"/>
</dbReference>
<sequence length="591" mass="65813">MALIQTSLIWVAYAVAVAILFLIASTFVYVYQKPRDRAAAVTIVCIFTTLALLATVLLIPVDVALVSSTSRSSLGRKKDWATPDKVDSIVYTLRIVYYTLYSLDAVLCLLVIPFTYFWYEEYDQDAAEHGEQTAAQRIGGALKWTLGFLIFVVAIFLVGFFVPFAKQAKEDKRLDLDYFKHLLSENHGERALSFGLGFLITVGTVLFVLYTGAGMALLPVAMIKSAPSVSAPTLAANTASQLETNRERQRQLEGRNEGREGGLDSRDRRELEALVREERTLIRRERLAAESSGEDRHWIVKAWIKTEAFFRPLKLIGGLILLVFALVIFASMLITGIDKAKNSICGAHCGYILGHINIFQPLNWVLVKSAKVFPIDYVLFLLLVLFLFSASVVGIATAGIRFLWVTIFKIRKGQTSPQALLMATVLLTLITLAINYSVAMVVAPQYATWGPQTYCDMKTNSLDEQPDCAEHKDLIKPCSELATNPAAQQVCTPSVLSTFINRVTINFPFFGIVLFWAQFAFLGVYLIVFLTTLFKAPTLDQEQIDRDLEEEEDEGLLASTGRRFGAAWSDVTGRATKPANYGATERDERIQ</sequence>
<gene>
    <name type="ORF">PTRG_07801</name>
</gene>
<comment type="function">
    <text evidence="1">Probable lysosomal cobalamin transporter. Required to export cobalamin from lysosomes allowing its conversion to cofactors (By similarity).</text>
</comment>
<comment type="subcellular location">
    <subcellularLocation>
        <location evidence="1">Lysosome membrane</location>
        <topology evidence="1">Multi-pass membrane protein</topology>
    </subcellularLocation>
</comment>
<comment type="similarity">
    <text evidence="4">Belongs to the LIMR family. LMBRD1 subfamily.</text>
</comment>
<proteinExistence type="inferred from homology"/>
<keyword id="KW-0846">Cobalamin</keyword>
<keyword id="KW-0170">Cobalt</keyword>
<keyword id="KW-0458">Lysosome</keyword>
<keyword id="KW-0472">Membrane</keyword>
<keyword id="KW-1185">Reference proteome</keyword>
<keyword id="KW-0812">Transmembrane</keyword>
<keyword id="KW-1133">Transmembrane helix</keyword>
<keyword id="KW-0813">Transport</keyword>
<organism>
    <name type="scientific">Pyrenophora tritici-repentis (strain Pt-1C-BFP)</name>
    <name type="common">Wheat tan spot fungus</name>
    <name type="synonym">Drechslera tritici-repentis</name>
    <dbReference type="NCBI Taxonomy" id="426418"/>
    <lineage>
        <taxon>Eukaryota</taxon>
        <taxon>Fungi</taxon>
        <taxon>Dikarya</taxon>
        <taxon>Ascomycota</taxon>
        <taxon>Pezizomycotina</taxon>
        <taxon>Dothideomycetes</taxon>
        <taxon>Pleosporomycetidae</taxon>
        <taxon>Pleosporales</taxon>
        <taxon>Pleosporineae</taxon>
        <taxon>Pleosporaceae</taxon>
        <taxon>Pyrenophora</taxon>
    </lineage>
</organism>
<feature type="chain" id="PRO_0000365838" description="Probable lysosomal cobalamin transporter">
    <location>
        <begin position="1"/>
        <end position="591"/>
    </location>
</feature>
<feature type="transmembrane region" description="Helical" evidence="2">
    <location>
        <begin position="8"/>
        <end position="28"/>
    </location>
</feature>
<feature type="transmembrane region" description="Helical" evidence="2">
    <location>
        <begin position="39"/>
        <end position="59"/>
    </location>
</feature>
<feature type="transmembrane region" description="Helical" evidence="2">
    <location>
        <begin position="95"/>
        <end position="115"/>
    </location>
</feature>
<feature type="transmembrane region" description="Helical" evidence="2">
    <location>
        <begin position="144"/>
        <end position="164"/>
    </location>
</feature>
<feature type="transmembrane region" description="Helical" evidence="2">
    <location>
        <begin position="198"/>
        <end position="218"/>
    </location>
</feature>
<feature type="transmembrane region" description="Helical" evidence="2">
    <location>
        <begin position="315"/>
        <end position="335"/>
    </location>
</feature>
<feature type="transmembrane region" description="Helical" evidence="2">
    <location>
        <begin position="378"/>
        <end position="398"/>
    </location>
</feature>
<feature type="transmembrane region" description="Helical" evidence="2">
    <location>
        <begin position="422"/>
        <end position="442"/>
    </location>
</feature>
<feature type="transmembrane region" description="Helical" evidence="2">
    <location>
        <begin position="509"/>
        <end position="529"/>
    </location>
</feature>
<feature type="region of interest" description="Disordered" evidence="3">
    <location>
        <begin position="238"/>
        <end position="266"/>
    </location>
</feature>
<feature type="compositionally biased region" description="Basic and acidic residues" evidence="3">
    <location>
        <begin position="244"/>
        <end position="266"/>
    </location>
</feature>
<accession>B2WCU2</accession>
<reference key="1">
    <citation type="journal article" date="2013" name="G3 (Bethesda)">
        <title>Comparative genomics of a plant-pathogenic fungus, Pyrenophora tritici-repentis, reveals transduplication and the impact of repeat elements on pathogenicity and population divergence.</title>
        <authorList>
            <person name="Manning V.A."/>
            <person name="Pandelova I."/>
            <person name="Dhillon B."/>
            <person name="Wilhelm L.J."/>
            <person name="Goodwin S.B."/>
            <person name="Berlin A.M."/>
            <person name="Figueroa M."/>
            <person name="Freitag M."/>
            <person name="Hane J.K."/>
            <person name="Henrissat B."/>
            <person name="Holman W.H."/>
            <person name="Kodira C.D."/>
            <person name="Martin J."/>
            <person name="Oliver R.P."/>
            <person name="Robbertse B."/>
            <person name="Schackwitz W."/>
            <person name="Schwartz D.C."/>
            <person name="Spatafora J.W."/>
            <person name="Turgeon B.G."/>
            <person name="Yandava C."/>
            <person name="Young S."/>
            <person name="Zhou S."/>
            <person name="Zeng Q."/>
            <person name="Grigoriev I.V."/>
            <person name="Ma L.-J."/>
            <person name="Ciuffetti L.M."/>
        </authorList>
    </citation>
    <scope>NUCLEOTIDE SEQUENCE [LARGE SCALE GENOMIC DNA]</scope>
    <source>
        <strain>Pt-1C-BFP</strain>
    </source>
</reference>
<evidence type="ECO:0000250" key="1"/>
<evidence type="ECO:0000255" key="2"/>
<evidence type="ECO:0000256" key="3">
    <source>
        <dbReference type="SAM" id="MobiDB-lite"/>
    </source>
</evidence>
<evidence type="ECO:0000305" key="4"/>